<name>BIOD_LEPBL</name>
<evidence type="ECO:0000255" key="1">
    <source>
        <dbReference type="HAMAP-Rule" id="MF_00336"/>
    </source>
</evidence>
<gene>
    <name evidence="1" type="primary">bioD</name>
    <name type="ordered locus">LBL_1412</name>
</gene>
<feature type="chain" id="PRO_0000302520" description="ATP-dependent dethiobiotin synthetase BioD">
    <location>
        <begin position="1"/>
        <end position="221"/>
    </location>
</feature>
<feature type="active site" evidence="1">
    <location>
        <position position="35"/>
    </location>
</feature>
<feature type="binding site" evidence="1">
    <location>
        <begin position="11"/>
        <end position="16"/>
    </location>
    <ligand>
        <name>ATP</name>
        <dbReference type="ChEBI" id="CHEBI:30616"/>
    </ligand>
</feature>
<feature type="binding site" evidence="1">
    <location>
        <position position="15"/>
    </location>
    <ligand>
        <name>Mg(2+)</name>
        <dbReference type="ChEBI" id="CHEBI:18420"/>
    </ligand>
</feature>
<feature type="binding site" evidence="1">
    <location>
        <position position="39"/>
    </location>
    <ligand>
        <name>substrate</name>
    </ligand>
</feature>
<feature type="binding site" evidence="1">
    <location>
        <position position="44"/>
    </location>
    <ligand>
        <name>ATP</name>
        <dbReference type="ChEBI" id="CHEBI:30616"/>
    </ligand>
</feature>
<feature type="binding site" evidence="1">
    <location>
        <position position="44"/>
    </location>
    <ligand>
        <name>Mg(2+)</name>
        <dbReference type="ChEBI" id="CHEBI:18420"/>
    </ligand>
</feature>
<feature type="binding site" evidence="1">
    <location>
        <begin position="103"/>
        <end position="106"/>
    </location>
    <ligand>
        <name>ATP</name>
        <dbReference type="ChEBI" id="CHEBI:30616"/>
    </ligand>
</feature>
<feature type="binding site" evidence="1">
    <location>
        <position position="103"/>
    </location>
    <ligand>
        <name>Mg(2+)</name>
        <dbReference type="ChEBI" id="CHEBI:18420"/>
    </ligand>
</feature>
<sequence length="221" mass="24720">MAVFIGATGTDIGKTLFSSLILGKYGKSLGLKYFKPVQTGNDSDRVTLMNLTGLHESYFLKNYYSLSFAGSPHYASELEGVEIDSDELSRHLYSIRDEKIIVEGAGGLLVPLTRKILTLELVRQSEIPLILVAPVSLGAINQTLLAIEAVQNRKIDLKGIYFIGIPDKTTEDNIRTITEWSGVTLLGNFFLNSKEKMSRERFQIECLSRFDQCEVIKKMFV</sequence>
<protein>
    <recommendedName>
        <fullName evidence="1">ATP-dependent dethiobiotin synthetase BioD</fullName>
        <ecNumber evidence="1">6.3.3.3</ecNumber>
    </recommendedName>
    <alternativeName>
        <fullName evidence="1">DTB synthetase</fullName>
        <shortName evidence="1">DTBS</shortName>
    </alternativeName>
    <alternativeName>
        <fullName evidence="1">Dethiobiotin synthase</fullName>
    </alternativeName>
</protein>
<accession>Q051U4</accession>
<dbReference type="EC" id="6.3.3.3" evidence="1"/>
<dbReference type="EMBL" id="CP000348">
    <property type="protein sequence ID" value="ABJ78901.1"/>
    <property type="molecule type" value="Genomic_DNA"/>
</dbReference>
<dbReference type="RefSeq" id="WP_011670107.1">
    <property type="nucleotide sequence ID" value="NC_008508.1"/>
</dbReference>
<dbReference type="SMR" id="Q051U4"/>
<dbReference type="KEGG" id="lbl:LBL_1412"/>
<dbReference type="HOGENOM" id="CLU_072551_2_0_12"/>
<dbReference type="UniPathway" id="UPA00078">
    <property type="reaction ID" value="UER00161"/>
</dbReference>
<dbReference type="GO" id="GO:0005829">
    <property type="term" value="C:cytosol"/>
    <property type="evidence" value="ECO:0007669"/>
    <property type="project" value="TreeGrafter"/>
</dbReference>
<dbReference type="GO" id="GO:0005524">
    <property type="term" value="F:ATP binding"/>
    <property type="evidence" value="ECO:0007669"/>
    <property type="project" value="UniProtKB-UniRule"/>
</dbReference>
<dbReference type="GO" id="GO:0004141">
    <property type="term" value="F:dethiobiotin synthase activity"/>
    <property type="evidence" value="ECO:0007669"/>
    <property type="project" value="UniProtKB-UniRule"/>
</dbReference>
<dbReference type="GO" id="GO:0000287">
    <property type="term" value="F:magnesium ion binding"/>
    <property type="evidence" value="ECO:0007669"/>
    <property type="project" value="UniProtKB-UniRule"/>
</dbReference>
<dbReference type="GO" id="GO:0009102">
    <property type="term" value="P:biotin biosynthetic process"/>
    <property type="evidence" value="ECO:0007669"/>
    <property type="project" value="UniProtKB-UniRule"/>
</dbReference>
<dbReference type="CDD" id="cd03109">
    <property type="entry name" value="DTBS"/>
    <property type="match status" value="1"/>
</dbReference>
<dbReference type="Gene3D" id="3.40.50.300">
    <property type="entry name" value="P-loop containing nucleotide triphosphate hydrolases"/>
    <property type="match status" value="1"/>
</dbReference>
<dbReference type="HAMAP" id="MF_00336">
    <property type="entry name" value="BioD"/>
    <property type="match status" value="1"/>
</dbReference>
<dbReference type="InterPro" id="IPR004472">
    <property type="entry name" value="DTB_synth_BioD"/>
</dbReference>
<dbReference type="InterPro" id="IPR027417">
    <property type="entry name" value="P-loop_NTPase"/>
</dbReference>
<dbReference type="NCBIfam" id="TIGR00347">
    <property type="entry name" value="bioD"/>
    <property type="match status" value="1"/>
</dbReference>
<dbReference type="PANTHER" id="PTHR43210:SF2">
    <property type="entry name" value="ATP-DEPENDENT DETHIOBIOTIN SYNTHETASE BIOD 2"/>
    <property type="match status" value="1"/>
</dbReference>
<dbReference type="PANTHER" id="PTHR43210">
    <property type="entry name" value="DETHIOBIOTIN SYNTHETASE"/>
    <property type="match status" value="1"/>
</dbReference>
<dbReference type="Pfam" id="PF13500">
    <property type="entry name" value="AAA_26"/>
    <property type="match status" value="1"/>
</dbReference>
<dbReference type="PIRSF" id="PIRSF006755">
    <property type="entry name" value="DTB_synth"/>
    <property type="match status" value="1"/>
</dbReference>
<dbReference type="SUPFAM" id="SSF52540">
    <property type="entry name" value="P-loop containing nucleoside triphosphate hydrolases"/>
    <property type="match status" value="1"/>
</dbReference>
<proteinExistence type="inferred from homology"/>
<organism>
    <name type="scientific">Leptospira borgpetersenii serovar Hardjo-bovis (strain L550)</name>
    <dbReference type="NCBI Taxonomy" id="355276"/>
    <lineage>
        <taxon>Bacteria</taxon>
        <taxon>Pseudomonadati</taxon>
        <taxon>Spirochaetota</taxon>
        <taxon>Spirochaetia</taxon>
        <taxon>Leptospirales</taxon>
        <taxon>Leptospiraceae</taxon>
        <taxon>Leptospira</taxon>
    </lineage>
</organism>
<comment type="function">
    <text evidence="1">Catalyzes a mechanistically unusual reaction, the ATP-dependent insertion of CO2 between the N7 and N8 nitrogen atoms of 7,8-diaminopelargonic acid (DAPA, also called 7,8-diammoniononanoate) to form a ureido ring.</text>
</comment>
<comment type="catalytic activity">
    <reaction evidence="1">
        <text>(7R,8S)-7,8-diammoniononanoate + CO2 + ATP = (4R,5S)-dethiobiotin + ADP + phosphate + 3 H(+)</text>
        <dbReference type="Rhea" id="RHEA:15805"/>
        <dbReference type="ChEBI" id="CHEBI:15378"/>
        <dbReference type="ChEBI" id="CHEBI:16526"/>
        <dbReference type="ChEBI" id="CHEBI:30616"/>
        <dbReference type="ChEBI" id="CHEBI:43474"/>
        <dbReference type="ChEBI" id="CHEBI:149469"/>
        <dbReference type="ChEBI" id="CHEBI:149473"/>
        <dbReference type="ChEBI" id="CHEBI:456216"/>
        <dbReference type="EC" id="6.3.3.3"/>
    </reaction>
</comment>
<comment type="cofactor">
    <cofactor evidence="1">
        <name>Mg(2+)</name>
        <dbReference type="ChEBI" id="CHEBI:18420"/>
    </cofactor>
</comment>
<comment type="pathway">
    <text evidence="1">Cofactor biosynthesis; biotin biosynthesis; biotin from 7,8-diaminononanoate: step 1/2.</text>
</comment>
<comment type="subunit">
    <text evidence="1">Homodimer.</text>
</comment>
<comment type="subcellular location">
    <subcellularLocation>
        <location evidence="1">Cytoplasm</location>
    </subcellularLocation>
</comment>
<comment type="similarity">
    <text evidence="1">Belongs to the dethiobiotin synthetase family.</text>
</comment>
<keyword id="KW-0067">ATP-binding</keyword>
<keyword id="KW-0093">Biotin biosynthesis</keyword>
<keyword id="KW-0963">Cytoplasm</keyword>
<keyword id="KW-0436">Ligase</keyword>
<keyword id="KW-0460">Magnesium</keyword>
<keyword id="KW-0479">Metal-binding</keyword>
<keyword id="KW-0547">Nucleotide-binding</keyword>
<reference key="1">
    <citation type="journal article" date="2006" name="Proc. Natl. Acad. Sci. U.S.A.">
        <title>Genome reduction in Leptospira borgpetersenii reflects limited transmission potential.</title>
        <authorList>
            <person name="Bulach D.M."/>
            <person name="Zuerner R.L."/>
            <person name="Wilson P."/>
            <person name="Seemann T."/>
            <person name="McGrath A."/>
            <person name="Cullen P.A."/>
            <person name="Davis J."/>
            <person name="Johnson M."/>
            <person name="Kuczek E."/>
            <person name="Alt D.P."/>
            <person name="Peterson-Burch B."/>
            <person name="Coppel R.L."/>
            <person name="Rood J.I."/>
            <person name="Davies J.K."/>
            <person name="Adler B."/>
        </authorList>
    </citation>
    <scope>NUCLEOTIDE SEQUENCE [LARGE SCALE GENOMIC DNA]</scope>
    <source>
        <strain>L550</strain>
    </source>
</reference>